<comment type="function">
    <text evidence="1">Major role in the synthesis of nucleoside triphosphates other than ATP. The ATP gamma phosphate is transferred to the NDP beta phosphate via a ping-pong mechanism, using a phosphorylated active-site intermediate.</text>
</comment>
<comment type="catalytic activity">
    <reaction evidence="1">
        <text>a 2'-deoxyribonucleoside 5'-diphosphate + ATP = a 2'-deoxyribonucleoside 5'-triphosphate + ADP</text>
        <dbReference type="Rhea" id="RHEA:44640"/>
        <dbReference type="ChEBI" id="CHEBI:30616"/>
        <dbReference type="ChEBI" id="CHEBI:61560"/>
        <dbReference type="ChEBI" id="CHEBI:73316"/>
        <dbReference type="ChEBI" id="CHEBI:456216"/>
        <dbReference type="EC" id="2.7.4.6"/>
    </reaction>
</comment>
<comment type="catalytic activity">
    <reaction evidence="1">
        <text>a ribonucleoside 5'-diphosphate + ATP = a ribonucleoside 5'-triphosphate + ADP</text>
        <dbReference type="Rhea" id="RHEA:18113"/>
        <dbReference type="ChEBI" id="CHEBI:30616"/>
        <dbReference type="ChEBI" id="CHEBI:57930"/>
        <dbReference type="ChEBI" id="CHEBI:61557"/>
        <dbReference type="ChEBI" id="CHEBI:456216"/>
        <dbReference type="EC" id="2.7.4.6"/>
    </reaction>
</comment>
<comment type="cofactor">
    <cofactor evidence="1">
        <name>Mg(2+)</name>
        <dbReference type="ChEBI" id="CHEBI:18420"/>
    </cofactor>
</comment>
<comment type="subunit">
    <text evidence="1">Homotetramer.</text>
</comment>
<comment type="subcellular location">
    <subcellularLocation>
        <location evidence="1">Cytoplasm</location>
    </subcellularLocation>
</comment>
<comment type="similarity">
    <text evidence="1">Belongs to the NDK family.</text>
</comment>
<feature type="chain" id="PRO_0000137076" description="Nucleoside diphosphate kinase">
    <location>
        <begin position="1"/>
        <end position="139"/>
    </location>
</feature>
<feature type="active site" description="Pros-phosphohistidine intermediate" evidence="1">
    <location>
        <position position="117"/>
    </location>
</feature>
<feature type="binding site" evidence="1">
    <location>
        <position position="11"/>
    </location>
    <ligand>
        <name>ATP</name>
        <dbReference type="ChEBI" id="CHEBI:30616"/>
    </ligand>
</feature>
<feature type="binding site" evidence="1">
    <location>
        <position position="59"/>
    </location>
    <ligand>
        <name>ATP</name>
        <dbReference type="ChEBI" id="CHEBI:30616"/>
    </ligand>
</feature>
<feature type="binding site" evidence="1">
    <location>
        <position position="87"/>
    </location>
    <ligand>
        <name>ATP</name>
        <dbReference type="ChEBI" id="CHEBI:30616"/>
    </ligand>
</feature>
<feature type="binding site" evidence="1">
    <location>
        <position position="93"/>
    </location>
    <ligand>
        <name>ATP</name>
        <dbReference type="ChEBI" id="CHEBI:30616"/>
    </ligand>
</feature>
<feature type="binding site" evidence="1">
    <location>
        <position position="104"/>
    </location>
    <ligand>
        <name>ATP</name>
        <dbReference type="ChEBI" id="CHEBI:30616"/>
    </ligand>
</feature>
<feature type="binding site" evidence="1">
    <location>
        <position position="114"/>
    </location>
    <ligand>
        <name>ATP</name>
        <dbReference type="ChEBI" id="CHEBI:30616"/>
    </ligand>
</feature>
<protein>
    <recommendedName>
        <fullName evidence="1">Nucleoside diphosphate kinase</fullName>
        <shortName evidence="1">NDK</shortName>
        <shortName evidence="1">NDP kinase</shortName>
        <ecNumber evidence="1">2.7.4.6</ecNumber>
    </recommendedName>
    <alternativeName>
        <fullName evidence="1">Nucleoside-2-P kinase</fullName>
    </alternativeName>
</protein>
<proteinExistence type="inferred from homology"/>
<evidence type="ECO:0000255" key="1">
    <source>
        <dbReference type="HAMAP-Rule" id="MF_00451"/>
    </source>
</evidence>
<keyword id="KW-0067">ATP-binding</keyword>
<keyword id="KW-0963">Cytoplasm</keyword>
<keyword id="KW-0418">Kinase</keyword>
<keyword id="KW-0460">Magnesium</keyword>
<keyword id="KW-0479">Metal-binding</keyword>
<keyword id="KW-0546">Nucleotide metabolism</keyword>
<keyword id="KW-0547">Nucleotide-binding</keyword>
<keyword id="KW-0597">Phosphoprotein</keyword>
<keyword id="KW-0808">Transferase</keyword>
<organism>
    <name type="scientific">Wolbachia pipientis wMel</name>
    <dbReference type="NCBI Taxonomy" id="163164"/>
    <lineage>
        <taxon>Bacteria</taxon>
        <taxon>Pseudomonadati</taxon>
        <taxon>Pseudomonadota</taxon>
        <taxon>Alphaproteobacteria</taxon>
        <taxon>Rickettsiales</taxon>
        <taxon>Anaplasmataceae</taxon>
        <taxon>Wolbachieae</taxon>
        <taxon>Wolbachia</taxon>
    </lineage>
</organism>
<sequence>MAIERTLSILKPDAVKNNITGNINSYIEQSGLKITAQKMMLLTKKQAELFYEIHKDRPFFGELVEFMTSGSVVVQVLVGENAVSKYRQIMGATDPKQADKGTIRGDFADDISENRVHGSDSLENARKEIAFFFAECELV</sequence>
<gene>
    <name evidence="1" type="primary">ndk</name>
    <name type="ordered locus">WD_1183</name>
</gene>
<dbReference type="EC" id="2.7.4.6" evidence="1"/>
<dbReference type="EMBL" id="AE017196">
    <property type="protein sequence ID" value="AAS14829.1"/>
    <property type="molecule type" value="Genomic_DNA"/>
</dbReference>
<dbReference type="RefSeq" id="WP_010082097.1">
    <property type="nucleotide sequence ID" value="NZ_OX384529.1"/>
</dbReference>
<dbReference type="SMR" id="Q73FY9"/>
<dbReference type="EnsemblBacteria" id="AAS14829">
    <property type="protein sequence ID" value="AAS14829"/>
    <property type="gene ID" value="WD_1183"/>
</dbReference>
<dbReference type="GeneID" id="70036651"/>
<dbReference type="KEGG" id="wol:WD_1183"/>
<dbReference type="eggNOG" id="COG0105">
    <property type="taxonomic scope" value="Bacteria"/>
</dbReference>
<dbReference type="Proteomes" id="UP000008215">
    <property type="component" value="Chromosome"/>
</dbReference>
<dbReference type="GO" id="GO:0005737">
    <property type="term" value="C:cytoplasm"/>
    <property type="evidence" value="ECO:0007669"/>
    <property type="project" value="UniProtKB-SubCell"/>
</dbReference>
<dbReference type="GO" id="GO:0005524">
    <property type="term" value="F:ATP binding"/>
    <property type="evidence" value="ECO:0007669"/>
    <property type="project" value="UniProtKB-UniRule"/>
</dbReference>
<dbReference type="GO" id="GO:0046872">
    <property type="term" value="F:metal ion binding"/>
    <property type="evidence" value="ECO:0007669"/>
    <property type="project" value="UniProtKB-KW"/>
</dbReference>
<dbReference type="GO" id="GO:0004550">
    <property type="term" value="F:nucleoside diphosphate kinase activity"/>
    <property type="evidence" value="ECO:0007669"/>
    <property type="project" value="UniProtKB-UniRule"/>
</dbReference>
<dbReference type="GO" id="GO:0006241">
    <property type="term" value="P:CTP biosynthetic process"/>
    <property type="evidence" value="ECO:0007669"/>
    <property type="project" value="UniProtKB-UniRule"/>
</dbReference>
<dbReference type="GO" id="GO:0006183">
    <property type="term" value="P:GTP biosynthetic process"/>
    <property type="evidence" value="ECO:0007669"/>
    <property type="project" value="UniProtKB-UniRule"/>
</dbReference>
<dbReference type="GO" id="GO:0006228">
    <property type="term" value="P:UTP biosynthetic process"/>
    <property type="evidence" value="ECO:0007669"/>
    <property type="project" value="UniProtKB-UniRule"/>
</dbReference>
<dbReference type="CDD" id="cd04413">
    <property type="entry name" value="NDPk_I"/>
    <property type="match status" value="1"/>
</dbReference>
<dbReference type="FunFam" id="3.30.70.141:FF:000003">
    <property type="entry name" value="Nucleoside diphosphate kinase"/>
    <property type="match status" value="1"/>
</dbReference>
<dbReference type="Gene3D" id="3.30.70.141">
    <property type="entry name" value="Nucleoside diphosphate kinase-like domain"/>
    <property type="match status" value="1"/>
</dbReference>
<dbReference type="HAMAP" id="MF_00451">
    <property type="entry name" value="NDP_kinase"/>
    <property type="match status" value="1"/>
</dbReference>
<dbReference type="InterPro" id="IPR034907">
    <property type="entry name" value="NDK-like_dom"/>
</dbReference>
<dbReference type="InterPro" id="IPR036850">
    <property type="entry name" value="NDK-like_dom_sf"/>
</dbReference>
<dbReference type="InterPro" id="IPR001564">
    <property type="entry name" value="Nucleoside_diP_kinase"/>
</dbReference>
<dbReference type="InterPro" id="IPR023005">
    <property type="entry name" value="Nucleoside_diP_kinase_AS"/>
</dbReference>
<dbReference type="NCBIfam" id="NF001908">
    <property type="entry name" value="PRK00668.1"/>
    <property type="match status" value="1"/>
</dbReference>
<dbReference type="PANTHER" id="PTHR46161">
    <property type="entry name" value="NUCLEOSIDE DIPHOSPHATE KINASE"/>
    <property type="match status" value="1"/>
</dbReference>
<dbReference type="PANTHER" id="PTHR46161:SF3">
    <property type="entry name" value="NUCLEOSIDE DIPHOSPHATE KINASE DDB_G0292928-RELATED"/>
    <property type="match status" value="1"/>
</dbReference>
<dbReference type="Pfam" id="PF00334">
    <property type="entry name" value="NDK"/>
    <property type="match status" value="1"/>
</dbReference>
<dbReference type="PRINTS" id="PR01243">
    <property type="entry name" value="NUCDPKINASE"/>
</dbReference>
<dbReference type="SMART" id="SM00562">
    <property type="entry name" value="NDK"/>
    <property type="match status" value="1"/>
</dbReference>
<dbReference type="SUPFAM" id="SSF54919">
    <property type="entry name" value="Nucleoside diphosphate kinase, NDK"/>
    <property type="match status" value="1"/>
</dbReference>
<dbReference type="PROSITE" id="PS00469">
    <property type="entry name" value="NDPK"/>
    <property type="match status" value="1"/>
</dbReference>
<dbReference type="PROSITE" id="PS51374">
    <property type="entry name" value="NDPK_LIKE"/>
    <property type="match status" value="1"/>
</dbReference>
<accession>Q73FY9</accession>
<reference key="1">
    <citation type="journal article" date="2004" name="PLoS Biol.">
        <title>Phylogenomics of the reproductive parasite Wolbachia pipientis wMel: a streamlined genome overrun by mobile genetic elements.</title>
        <authorList>
            <person name="Wu M."/>
            <person name="Sun L.V."/>
            <person name="Vamathevan J.J."/>
            <person name="Riegler M."/>
            <person name="DeBoy R.T."/>
            <person name="Brownlie J.C."/>
            <person name="McGraw E.A."/>
            <person name="Martin W."/>
            <person name="Esser C."/>
            <person name="Ahmadinejad N."/>
            <person name="Wiegand C."/>
            <person name="Madupu R."/>
            <person name="Beanan M.J."/>
            <person name="Brinkac L.M."/>
            <person name="Daugherty S.C."/>
            <person name="Durkin A.S."/>
            <person name="Kolonay J.F."/>
            <person name="Nelson W.C."/>
            <person name="Mohamoud Y."/>
            <person name="Lee P."/>
            <person name="Berry K.J."/>
            <person name="Young M.B."/>
            <person name="Utterback T.R."/>
            <person name="Weidman J.F."/>
            <person name="Nierman W.C."/>
            <person name="Paulsen I.T."/>
            <person name="Nelson K.E."/>
            <person name="Tettelin H."/>
            <person name="O'Neill S.L."/>
            <person name="Eisen J.A."/>
        </authorList>
    </citation>
    <scope>NUCLEOTIDE SEQUENCE [LARGE SCALE GENOMIC DNA]</scope>
</reference>
<name>NDK_WOLPM</name>